<dbReference type="EC" id="1.14.-.-"/>
<dbReference type="EMBL" id="AF159624">
    <property type="protein sequence ID" value="AAF76522.1"/>
    <property type="molecule type" value="mRNA"/>
</dbReference>
<dbReference type="EMBL" id="AE014298">
    <property type="protein sequence ID" value="AAF48049.1"/>
    <property type="molecule type" value="Genomic_DNA"/>
</dbReference>
<dbReference type="EMBL" id="AY060719">
    <property type="protein sequence ID" value="AAL28267.1"/>
    <property type="molecule type" value="mRNA"/>
</dbReference>
<dbReference type="PIR" id="JC7327">
    <property type="entry name" value="JC7327"/>
</dbReference>
<dbReference type="RefSeq" id="NP_572721.1">
    <property type="nucleotide sequence ID" value="NM_132493.3"/>
</dbReference>
<dbReference type="RefSeq" id="NP_727531.2">
    <property type="nucleotide sequence ID" value="NM_167287.2"/>
</dbReference>
<dbReference type="SMR" id="Q9VYY4"/>
<dbReference type="BioGRID" id="58504">
    <property type="interactions" value="4"/>
</dbReference>
<dbReference type="FunCoup" id="Q9VYY4">
    <property type="interactions" value="19"/>
</dbReference>
<dbReference type="IntAct" id="Q9VYY4">
    <property type="interactions" value="4"/>
</dbReference>
<dbReference type="STRING" id="7227.FBpp0312025"/>
<dbReference type="PaxDb" id="7227-FBpp0073352"/>
<dbReference type="DNASU" id="32093"/>
<dbReference type="EnsemblMetazoa" id="FBtr0073503">
    <property type="protein sequence ID" value="FBpp0073352"/>
    <property type="gene ID" value="FBgn0030304"/>
</dbReference>
<dbReference type="EnsemblMetazoa" id="FBtr0346268">
    <property type="protein sequence ID" value="FBpp0312025"/>
    <property type="gene ID" value="FBgn0030304"/>
</dbReference>
<dbReference type="GeneID" id="32093"/>
<dbReference type="KEGG" id="dme:Dmel_CG11715"/>
<dbReference type="UCSC" id="CG11715-RA">
    <property type="organism name" value="d. melanogaster"/>
</dbReference>
<dbReference type="AGR" id="FB:FBgn0030304"/>
<dbReference type="CTD" id="32093"/>
<dbReference type="FlyBase" id="FBgn0030304">
    <property type="gene designation" value="Cyp4g15"/>
</dbReference>
<dbReference type="VEuPathDB" id="VectorBase:FBgn0030304"/>
<dbReference type="eggNOG" id="KOG0157">
    <property type="taxonomic scope" value="Eukaryota"/>
</dbReference>
<dbReference type="HOGENOM" id="CLU_001570_5_1_1"/>
<dbReference type="InParanoid" id="Q9VYY4"/>
<dbReference type="OMA" id="FKMHRQP"/>
<dbReference type="OrthoDB" id="1470350at2759"/>
<dbReference type="PhylomeDB" id="Q9VYY4"/>
<dbReference type="Reactome" id="R-DME-193144">
    <property type="pathway name" value="Estrogen biosynthesis"/>
</dbReference>
<dbReference type="Reactome" id="R-DME-211976">
    <property type="pathway name" value="Endogenous sterols"/>
</dbReference>
<dbReference type="BioGRID-ORCS" id="32093">
    <property type="hits" value="0 hits in 1 CRISPR screen"/>
</dbReference>
<dbReference type="GenomeRNAi" id="32093"/>
<dbReference type="PRO" id="PR:Q9VYY4"/>
<dbReference type="Proteomes" id="UP000000803">
    <property type="component" value="Chromosome X"/>
</dbReference>
<dbReference type="Bgee" id="FBgn0030304">
    <property type="expression patterns" value="Expressed in reticular neuropil associated glial cell (Drosophila) in brain and 57 other cell types or tissues"/>
</dbReference>
<dbReference type="ExpressionAtlas" id="Q9VYY4">
    <property type="expression patterns" value="baseline and differential"/>
</dbReference>
<dbReference type="GO" id="GO:0005789">
    <property type="term" value="C:endoplasmic reticulum membrane"/>
    <property type="evidence" value="ECO:0007669"/>
    <property type="project" value="UniProtKB-SubCell"/>
</dbReference>
<dbReference type="GO" id="GO:0020037">
    <property type="term" value="F:heme binding"/>
    <property type="evidence" value="ECO:0007669"/>
    <property type="project" value="InterPro"/>
</dbReference>
<dbReference type="GO" id="GO:0005506">
    <property type="term" value="F:iron ion binding"/>
    <property type="evidence" value="ECO:0007669"/>
    <property type="project" value="InterPro"/>
</dbReference>
<dbReference type="GO" id="GO:0004497">
    <property type="term" value="F:monooxygenase activity"/>
    <property type="evidence" value="ECO:0007669"/>
    <property type="project" value="UniProtKB-KW"/>
</dbReference>
<dbReference type="GO" id="GO:0016705">
    <property type="term" value="F:oxidoreductase activity, acting on paired donors, with incorporation or reduction of molecular oxygen"/>
    <property type="evidence" value="ECO:0007669"/>
    <property type="project" value="InterPro"/>
</dbReference>
<dbReference type="CDD" id="cd20628">
    <property type="entry name" value="CYP4"/>
    <property type="match status" value="1"/>
</dbReference>
<dbReference type="Gene3D" id="1.10.630.10">
    <property type="entry name" value="Cytochrome P450"/>
    <property type="match status" value="2"/>
</dbReference>
<dbReference type="InterPro" id="IPR001128">
    <property type="entry name" value="Cyt_P450"/>
</dbReference>
<dbReference type="InterPro" id="IPR017972">
    <property type="entry name" value="Cyt_P450_CS"/>
</dbReference>
<dbReference type="InterPro" id="IPR002401">
    <property type="entry name" value="Cyt_P450_E_grp-I"/>
</dbReference>
<dbReference type="InterPro" id="IPR036396">
    <property type="entry name" value="Cyt_P450_sf"/>
</dbReference>
<dbReference type="InterPro" id="IPR050196">
    <property type="entry name" value="Cytochrome_P450_Monoox"/>
</dbReference>
<dbReference type="PANTHER" id="PTHR24291:SF106">
    <property type="entry name" value="CYTOCHROME P450 4G1-RELATED"/>
    <property type="match status" value="1"/>
</dbReference>
<dbReference type="PANTHER" id="PTHR24291">
    <property type="entry name" value="CYTOCHROME P450 FAMILY 4"/>
    <property type="match status" value="1"/>
</dbReference>
<dbReference type="Pfam" id="PF00067">
    <property type="entry name" value="p450"/>
    <property type="match status" value="2"/>
</dbReference>
<dbReference type="PRINTS" id="PR00463">
    <property type="entry name" value="EP450I"/>
</dbReference>
<dbReference type="PRINTS" id="PR00385">
    <property type="entry name" value="P450"/>
</dbReference>
<dbReference type="SUPFAM" id="SSF48264">
    <property type="entry name" value="Cytochrome P450"/>
    <property type="match status" value="1"/>
</dbReference>
<dbReference type="PROSITE" id="PS00086">
    <property type="entry name" value="CYTOCHROME_P450"/>
    <property type="match status" value="1"/>
</dbReference>
<reference key="1">
    <citation type="journal article" date="2000" name="Biochem. Biophys. Res. Commun.">
        <title>A new cytochrome P450 from Drosophila melanogaster, CYP4G15, expressed in the nervous system.</title>
        <authorList>
            <person name="Maibeche-Coisne M."/>
            <person name="Monti-Dedieu L."/>
            <person name="Aragon S."/>
            <person name="Dauphin-Villemant C."/>
        </authorList>
    </citation>
    <scope>NUCLEOTIDE SEQUENCE [MRNA]</scope>
    <scope>FUNCTION</scope>
    <scope>TISSUE SPECIFICITY</scope>
    <scope>DEVELOPMENTAL STAGE</scope>
    <source>
        <strain>Oregon-R</strain>
        <tissue>Larva</tissue>
    </source>
</reference>
<reference key="2">
    <citation type="journal article" date="2000" name="Science">
        <title>The genome sequence of Drosophila melanogaster.</title>
        <authorList>
            <person name="Adams M.D."/>
            <person name="Celniker S.E."/>
            <person name="Holt R.A."/>
            <person name="Evans C.A."/>
            <person name="Gocayne J.D."/>
            <person name="Amanatides P.G."/>
            <person name="Scherer S.E."/>
            <person name="Li P.W."/>
            <person name="Hoskins R.A."/>
            <person name="Galle R.F."/>
            <person name="George R.A."/>
            <person name="Lewis S.E."/>
            <person name="Richards S."/>
            <person name="Ashburner M."/>
            <person name="Henderson S.N."/>
            <person name="Sutton G.G."/>
            <person name="Wortman J.R."/>
            <person name="Yandell M.D."/>
            <person name="Zhang Q."/>
            <person name="Chen L.X."/>
            <person name="Brandon R.C."/>
            <person name="Rogers Y.-H.C."/>
            <person name="Blazej R.G."/>
            <person name="Champe M."/>
            <person name="Pfeiffer B.D."/>
            <person name="Wan K.H."/>
            <person name="Doyle C."/>
            <person name="Baxter E.G."/>
            <person name="Helt G."/>
            <person name="Nelson C.R."/>
            <person name="Miklos G.L.G."/>
            <person name="Abril J.F."/>
            <person name="Agbayani A."/>
            <person name="An H.-J."/>
            <person name="Andrews-Pfannkoch C."/>
            <person name="Baldwin D."/>
            <person name="Ballew R.M."/>
            <person name="Basu A."/>
            <person name="Baxendale J."/>
            <person name="Bayraktaroglu L."/>
            <person name="Beasley E.M."/>
            <person name="Beeson K.Y."/>
            <person name="Benos P.V."/>
            <person name="Berman B.P."/>
            <person name="Bhandari D."/>
            <person name="Bolshakov S."/>
            <person name="Borkova D."/>
            <person name="Botchan M.R."/>
            <person name="Bouck J."/>
            <person name="Brokstein P."/>
            <person name="Brottier P."/>
            <person name="Burtis K.C."/>
            <person name="Busam D.A."/>
            <person name="Butler H."/>
            <person name="Cadieu E."/>
            <person name="Center A."/>
            <person name="Chandra I."/>
            <person name="Cherry J.M."/>
            <person name="Cawley S."/>
            <person name="Dahlke C."/>
            <person name="Davenport L.B."/>
            <person name="Davies P."/>
            <person name="de Pablos B."/>
            <person name="Delcher A."/>
            <person name="Deng Z."/>
            <person name="Mays A.D."/>
            <person name="Dew I."/>
            <person name="Dietz S.M."/>
            <person name="Dodson K."/>
            <person name="Doup L.E."/>
            <person name="Downes M."/>
            <person name="Dugan-Rocha S."/>
            <person name="Dunkov B.C."/>
            <person name="Dunn P."/>
            <person name="Durbin K.J."/>
            <person name="Evangelista C.C."/>
            <person name="Ferraz C."/>
            <person name="Ferriera S."/>
            <person name="Fleischmann W."/>
            <person name="Fosler C."/>
            <person name="Gabrielian A.E."/>
            <person name="Garg N.S."/>
            <person name="Gelbart W.M."/>
            <person name="Glasser K."/>
            <person name="Glodek A."/>
            <person name="Gong F."/>
            <person name="Gorrell J.H."/>
            <person name="Gu Z."/>
            <person name="Guan P."/>
            <person name="Harris M."/>
            <person name="Harris N.L."/>
            <person name="Harvey D.A."/>
            <person name="Heiman T.J."/>
            <person name="Hernandez J.R."/>
            <person name="Houck J."/>
            <person name="Hostin D."/>
            <person name="Houston K.A."/>
            <person name="Howland T.J."/>
            <person name="Wei M.-H."/>
            <person name="Ibegwam C."/>
            <person name="Jalali M."/>
            <person name="Kalush F."/>
            <person name="Karpen G.H."/>
            <person name="Ke Z."/>
            <person name="Kennison J.A."/>
            <person name="Ketchum K.A."/>
            <person name="Kimmel B.E."/>
            <person name="Kodira C.D."/>
            <person name="Kraft C.L."/>
            <person name="Kravitz S."/>
            <person name="Kulp D."/>
            <person name="Lai Z."/>
            <person name="Lasko P."/>
            <person name="Lei Y."/>
            <person name="Levitsky A.A."/>
            <person name="Li J.H."/>
            <person name="Li Z."/>
            <person name="Liang Y."/>
            <person name="Lin X."/>
            <person name="Liu X."/>
            <person name="Mattei B."/>
            <person name="McIntosh T.C."/>
            <person name="McLeod M.P."/>
            <person name="McPherson D."/>
            <person name="Merkulov G."/>
            <person name="Milshina N.V."/>
            <person name="Mobarry C."/>
            <person name="Morris J."/>
            <person name="Moshrefi A."/>
            <person name="Mount S.M."/>
            <person name="Moy M."/>
            <person name="Murphy B."/>
            <person name="Murphy L."/>
            <person name="Muzny D.M."/>
            <person name="Nelson D.L."/>
            <person name="Nelson D.R."/>
            <person name="Nelson K.A."/>
            <person name="Nixon K."/>
            <person name="Nusskern D.R."/>
            <person name="Pacleb J.M."/>
            <person name="Palazzolo M."/>
            <person name="Pittman G.S."/>
            <person name="Pan S."/>
            <person name="Pollard J."/>
            <person name="Puri V."/>
            <person name="Reese M.G."/>
            <person name="Reinert K."/>
            <person name="Remington K."/>
            <person name="Saunders R.D.C."/>
            <person name="Scheeler F."/>
            <person name="Shen H."/>
            <person name="Shue B.C."/>
            <person name="Siden-Kiamos I."/>
            <person name="Simpson M."/>
            <person name="Skupski M.P."/>
            <person name="Smith T.J."/>
            <person name="Spier E."/>
            <person name="Spradling A.C."/>
            <person name="Stapleton M."/>
            <person name="Strong R."/>
            <person name="Sun E."/>
            <person name="Svirskas R."/>
            <person name="Tector C."/>
            <person name="Turner R."/>
            <person name="Venter E."/>
            <person name="Wang A.H."/>
            <person name="Wang X."/>
            <person name="Wang Z.-Y."/>
            <person name="Wassarman D.A."/>
            <person name="Weinstock G.M."/>
            <person name="Weissenbach J."/>
            <person name="Williams S.M."/>
            <person name="Woodage T."/>
            <person name="Worley K.C."/>
            <person name="Wu D."/>
            <person name="Yang S."/>
            <person name="Yao Q.A."/>
            <person name="Ye J."/>
            <person name="Yeh R.-F."/>
            <person name="Zaveri J.S."/>
            <person name="Zhan M."/>
            <person name="Zhang G."/>
            <person name="Zhao Q."/>
            <person name="Zheng L."/>
            <person name="Zheng X.H."/>
            <person name="Zhong F.N."/>
            <person name="Zhong W."/>
            <person name="Zhou X."/>
            <person name="Zhu S.C."/>
            <person name="Zhu X."/>
            <person name="Smith H.O."/>
            <person name="Gibbs R.A."/>
            <person name="Myers E.W."/>
            <person name="Rubin G.M."/>
            <person name="Venter J.C."/>
        </authorList>
    </citation>
    <scope>NUCLEOTIDE SEQUENCE [LARGE SCALE GENOMIC DNA]</scope>
    <source>
        <strain>Berkeley</strain>
    </source>
</reference>
<reference key="3">
    <citation type="journal article" date="2002" name="Genome Biol.">
        <title>Annotation of the Drosophila melanogaster euchromatic genome: a systematic review.</title>
        <authorList>
            <person name="Misra S."/>
            <person name="Crosby M.A."/>
            <person name="Mungall C.J."/>
            <person name="Matthews B.B."/>
            <person name="Campbell K.S."/>
            <person name="Hradecky P."/>
            <person name="Huang Y."/>
            <person name="Kaminker J.S."/>
            <person name="Millburn G.H."/>
            <person name="Prochnik S.E."/>
            <person name="Smith C.D."/>
            <person name="Tupy J.L."/>
            <person name="Whitfield E.J."/>
            <person name="Bayraktaroglu L."/>
            <person name="Berman B.P."/>
            <person name="Bettencourt B.R."/>
            <person name="Celniker S.E."/>
            <person name="de Grey A.D.N.J."/>
            <person name="Drysdale R.A."/>
            <person name="Harris N.L."/>
            <person name="Richter J."/>
            <person name="Russo S."/>
            <person name="Schroeder A.J."/>
            <person name="Shu S.Q."/>
            <person name="Stapleton M."/>
            <person name="Yamada C."/>
            <person name="Ashburner M."/>
            <person name="Gelbart W.M."/>
            <person name="Rubin G.M."/>
            <person name="Lewis S.E."/>
        </authorList>
    </citation>
    <scope>GENOME REANNOTATION</scope>
    <source>
        <strain>Berkeley</strain>
    </source>
</reference>
<reference key="4">
    <citation type="journal article" date="2002" name="Genome Biol.">
        <title>A Drosophila full-length cDNA resource.</title>
        <authorList>
            <person name="Stapleton M."/>
            <person name="Carlson J.W."/>
            <person name="Brokstein P."/>
            <person name="Yu C."/>
            <person name="Champe M."/>
            <person name="George R.A."/>
            <person name="Guarin H."/>
            <person name="Kronmiller B."/>
            <person name="Pacleb J.M."/>
            <person name="Park S."/>
            <person name="Wan K.H."/>
            <person name="Rubin G.M."/>
            <person name="Celniker S.E."/>
        </authorList>
    </citation>
    <scope>NUCLEOTIDE SEQUENCE [LARGE SCALE MRNA]</scope>
    <source>
        <strain>Berkeley</strain>
        <tissue>Head</tissue>
    </source>
</reference>
<gene>
    <name type="primary">Cyp4g15</name>
    <name type="ORF">CG11715</name>
</gene>
<sequence length="574" mass="65380">MEVLKKDAALGSPSSVFYFLLLPTLVLWYIYWRLSRAHLYRLAGRLPGPRGLPIVGHLFDVIGPASSVFRTVIRKSAPFEHIAKMWIGPKLVVFIYDPRDVELLLSSHVYIDKASEYKFFKPWLGDGLLISTGQKWRSHRKLIAPTFHLNVLKSFIELFNENSRNVVRKLRAEDGRTFDCHDYMSEATVEILLETAMGVSKKTQDKSGFEYAMAVMRMCDILHARHRSIFLRNEFVFTLTRYYKEQGRLLNIIHGLTTKVIRSKKAAFEQGTRGSLAQCELKAAALEREREQNGGVDQTPSTAGSDEKDREKDKEKASPVAGLSYGQSAGLKDDLDVEDNDIGEKKRLAFLDLMLESAQNGALITDTEIKEQVDTIMFEGHDTTAAGSSFFLSLMGIHQDIQDRVLAELDSIFGDSQRPATFQDTLEMKYLERCLMETLRMYPPVPLIARELQEDLKLNSGNYVIPRGATVTVATVLLHRNPKVYANPNVFDPDNFLPERQANRHYYAFVPFSAGPRSCVGRKYAMLKLKILLSTILRNYRVYSDLTESDFKLQADIILKREEGFRVRLQPRTS</sequence>
<evidence type="ECO:0000250" key="1"/>
<evidence type="ECO:0000256" key="2">
    <source>
        <dbReference type="SAM" id="MobiDB-lite"/>
    </source>
</evidence>
<evidence type="ECO:0000269" key="3">
    <source>
    </source>
</evidence>
<evidence type="ECO:0000305" key="4"/>
<keyword id="KW-0256">Endoplasmic reticulum</keyword>
<keyword id="KW-0349">Heme</keyword>
<keyword id="KW-0408">Iron</keyword>
<keyword id="KW-0472">Membrane</keyword>
<keyword id="KW-0479">Metal-binding</keyword>
<keyword id="KW-0492">Microsome</keyword>
<keyword id="KW-0503">Monooxygenase</keyword>
<keyword id="KW-0560">Oxidoreductase</keyword>
<keyword id="KW-1185">Reference proteome</keyword>
<comment type="function">
    <text evidence="3">Probably involved in steroid hormones biosynthesis.</text>
</comment>
<comment type="cofactor">
    <cofactor evidence="1">
        <name>heme</name>
        <dbReference type="ChEBI" id="CHEBI:30413"/>
    </cofactor>
</comment>
<comment type="subcellular location">
    <subcellularLocation>
        <location evidence="4">Endoplasmic reticulum membrane</location>
        <topology evidence="4">Peripheral membrane protein</topology>
    </subcellularLocation>
    <subcellularLocation>
        <location evidence="4">Microsome membrane</location>
        <topology evidence="4">Peripheral membrane protein</topology>
    </subcellularLocation>
</comment>
<comment type="tissue specificity">
    <text evidence="3">Expressed in larval brain cortex cells and ring glands and weakly in larval digestive system and adult nervous system.</text>
</comment>
<comment type="developmental stage">
    <text evidence="3">Expressed throughout development.</text>
</comment>
<comment type="similarity">
    <text evidence="4">Belongs to the cytochrome P450 family.</text>
</comment>
<proteinExistence type="evidence at transcript level"/>
<name>C4G15_DROME</name>
<protein>
    <recommendedName>
        <fullName>Cytochrome P450 4g15</fullName>
        <ecNumber>1.14.-.-</ecNumber>
    </recommendedName>
    <alternativeName>
        <fullName>CYPIVG15</fullName>
    </alternativeName>
</protein>
<organism>
    <name type="scientific">Drosophila melanogaster</name>
    <name type="common">Fruit fly</name>
    <dbReference type="NCBI Taxonomy" id="7227"/>
    <lineage>
        <taxon>Eukaryota</taxon>
        <taxon>Metazoa</taxon>
        <taxon>Ecdysozoa</taxon>
        <taxon>Arthropoda</taxon>
        <taxon>Hexapoda</taxon>
        <taxon>Insecta</taxon>
        <taxon>Pterygota</taxon>
        <taxon>Neoptera</taxon>
        <taxon>Endopterygota</taxon>
        <taxon>Diptera</taxon>
        <taxon>Brachycera</taxon>
        <taxon>Muscomorpha</taxon>
        <taxon>Ephydroidea</taxon>
        <taxon>Drosophilidae</taxon>
        <taxon>Drosophila</taxon>
        <taxon>Sophophora</taxon>
    </lineage>
</organism>
<accession>Q9VYY4</accession>
<feature type="chain" id="PRO_0000051844" description="Cytochrome P450 4g15">
    <location>
        <begin position="1"/>
        <end position="574"/>
    </location>
</feature>
<feature type="region of interest" description="Disordered" evidence="2">
    <location>
        <begin position="288"/>
        <end position="327"/>
    </location>
</feature>
<feature type="compositionally biased region" description="Polar residues" evidence="2">
    <location>
        <begin position="295"/>
        <end position="304"/>
    </location>
</feature>
<feature type="compositionally biased region" description="Basic and acidic residues" evidence="2">
    <location>
        <begin position="305"/>
        <end position="317"/>
    </location>
</feature>
<feature type="binding site" description="covalent" evidence="1">
    <location>
        <position position="379"/>
    </location>
    <ligand>
        <name>heme</name>
        <dbReference type="ChEBI" id="CHEBI:30413"/>
    </ligand>
</feature>
<feature type="binding site" description="axial binding residue" evidence="1">
    <location>
        <position position="519"/>
    </location>
    <ligand>
        <name>heme</name>
        <dbReference type="ChEBI" id="CHEBI:30413"/>
    </ligand>
    <ligandPart>
        <name>Fe</name>
        <dbReference type="ChEBI" id="CHEBI:18248"/>
    </ligandPart>
</feature>
<feature type="sequence conflict" description="In Ref. 1; AAF76522." evidence="4" ref="1">
    <original>VAG</original>
    <variation>WRD</variation>
    <location>
        <begin position="320"/>
        <end position="322"/>
    </location>
</feature>
<feature type="sequence conflict" description="In Ref. 1; AAF76522." evidence="4" ref="1">
    <original>D</original>
    <variation>N</variation>
    <location>
        <position position="336"/>
    </location>
</feature>
<feature type="sequence conflict" description="In Ref. 1; AAF76522." evidence="4" ref="1">
    <original>E</original>
    <variation>K</variation>
    <location>
        <position position="344"/>
    </location>
</feature>